<reference key="1">
    <citation type="journal article" date="1998" name="Nature">
        <title>The complete genome of the hyperthermophilic bacterium Aquifex aeolicus.</title>
        <authorList>
            <person name="Deckert G."/>
            <person name="Warren P.V."/>
            <person name="Gaasterland T."/>
            <person name="Young W.G."/>
            <person name="Lenox A.L."/>
            <person name="Graham D.E."/>
            <person name="Overbeek R."/>
            <person name="Snead M.A."/>
            <person name="Keller M."/>
            <person name="Aujay M."/>
            <person name="Huber R."/>
            <person name="Feldman R.A."/>
            <person name="Short J.M."/>
            <person name="Olsen G.J."/>
            <person name="Swanson R.V."/>
        </authorList>
    </citation>
    <scope>NUCLEOTIDE SEQUENCE [LARGE SCALE GENOMIC DNA]</scope>
    <source>
        <strain>VF5</strain>
    </source>
</reference>
<protein>
    <recommendedName>
        <fullName>Uncharacterized protein aq_591</fullName>
    </recommendedName>
</protein>
<evidence type="ECO:0000255" key="1"/>
<dbReference type="EMBL" id="AE000657">
    <property type="protein sequence ID" value="AAC06816.1"/>
    <property type="molecule type" value="Genomic_DNA"/>
</dbReference>
<dbReference type="PIR" id="A70353">
    <property type="entry name" value="A70353"/>
</dbReference>
<dbReference type="RefSeq" id="NP_213413.1">
    <property type="nucleotide sequence ID" value="NC_000918.1"/>
</dbReference>
<dbReference type="RefSeq" id="WP_010880351.1">
    <property type="nucleotide sequence ID" value="NC_000918.1"/>
</dbReference>
<dbReference type="SMR" id="O66853"/>
<dbReference type="STRING" id="224324.aq_591"/>
<dbReference type="EnsemblBacteria" id="AAC06816">
    <property type="protein sequence ID" value="AAC06816"/>
    <property type="gene ID" value="aq_591"/>
</dbReference>
<dbReference type="KEGG" id="aae:aq_591"/>
<dbReference type="eggNOG" id="COG1547">
    <property type="taxonomic scope" value="Bacteria"/>
</dbReference>
<dbReference type="HOGENOM" id="CLU_833264_0_0_0"/>
<dbReference type="InParanoid" id="O66853"/>
<dbReference type="OrthoDB" id="160968at2"/>
<dbReference type="Proteomes" id="UP000000798">
    <property type="component" value="Chromosome"/>
</dbReference>
<dbReference type="Gene3D" id="1.10.3450.10">
    <property type="entry name" value="TTHA0068-like"/>
    <property type="match status" value="1"/>
</dbReference>
<dbReference type="InterPro" id="IPR005500">
    <property type="entry name" value="DUF309"/>
</dbReference>
<dbReference type="InterPro" id="IPR023203">
    <property type="entry name" value="TTHA0068_sf"/>
</dbReference>
<dbReference type="Pfam" id="PF03745">
    <property type="entry name" value="DUF309"/>
    <property type="match status" value="1"/>
</dbReference>
<dbReference type="SUPFAM" id="SSF140663">
    <property type="entry name" value="TTHA0068-like"/>
    <property type="match status" value="1"/>
</dbReference>
<sequence length="333" mass="39213">MLKHLSEKFIYYMAEYFFEFEKRKHYYKLANNLYNSYLKGKKFNRSLLKKVKEDLNLWIDNPNQIQVYSRFLNEVEKEGVKSFGEGLAIIPLINLYREVWRELEEEQNKVEKLREYILKLDSCEICTRGLEGEEFFNCLTQNVDFLTATHIANFFFEEEFLPLNEEIAQILNISKENYFEVIKKLKGANLKNLYGALYVLLQRDSVKVNHVKRLLGISREAELLKEAQYAWNTGDFYRAHEILEEVWGLFKNEEIKKCYRGLIRAAIALHRFKEGNPQSGANVVKQALLDMANCPDNFRGINLGEIRAYLEEVLGTKEIGNPPELKYNIKSEE</sequence>
<proteinExistence type="predicted"/>
<accession>O66853</accession>
<organism>
    <name type="scientific">Aquifex aeolicus (strain VF5)</name>
    <dbReference type="NCBI Taxonomy" id="224324"/>
    <lineage>
        <taxon>Bacteria</taxon>
        <taxon>Pseudomonadati</taxon>
        <taxon>Aquificota</taxon>
        <taxon>Aquificia</taxon>
        <taxon>Aquificales</taxon>
        <taxon>Aquificaceae</taxon>
        <taxon>Aquifex</taxon>
    </lineage>
</organism>
<keyword id="KW-0175">Coiled coil</keyword>
<keyword id="KW-1185">Reference proteome</keyword>
<name>Y591_AQUAE</name>
<feature type="chain" id="PRO_0000186872" description="Uncharacterized protein aq_591">
    <location>
        <begin position="1"/>
        <end position="333"/>
    </location>
</feature>
<feature type="coiled-coil region" evidence="1">
    <location>
        <begin position="94"/>
        <end position="122"/>
    </location>
</feature>
<gene>
    <name type="ordered locus">aq_591</name>
</gene>